<reference key="1">
    <citation type="journal article" date="2003" name="J. Bacteriol.">
        <title>Comparative genomics of Salmonella enterica serovar Typhi strains Ty2 and CT18.</title>
        <authorList>
            <person name="Deng W."/>
            <person name="Liou S.-R."/>
            <person name="Plunkett G. III"/>
            <person name="Mayhew G.F."/>
            <person name="Rose D.J."/>
            <person name="Burland V."/>
            <person name="Kodoyianni V."/>
            <person name="Schwartz D.C."/>
            <person name="Blattner F.R."/>
        </authorList>
    </citation>
    <scope>NUCLEOTIDE SEQUENCE [LARGE SCALE GENOMIC DNA]</scope>
    <source>
        <strain>ATCC 700931 / Ty2</strain>
    </source>
</reference>
<reference key="2">
    <citation type="journal article" date="2001" name="Nature">
        <title>Complete genome sequence of a multiple drug resistant Salmonella enterica serovar Typhi CT18.</title>
        <authorList>
            <person name="Parkhill J."/>
            <person name="Dougan G."/>
            <person name="James K.D."/>
            <person name="Thomson N.R."/>
            <person name="Pickard D."/>
            <person name="Wain J."/>
            <person name="Churcher C.M."/>
            <person name="Mungall K.L."/>
            <person name="Bentley S.D."/>
            <person name="Holden M.T.G."/>
            <person name="Sebaihia M."/>
            <person name="Baker S."/>
            <person name="Basham D."/>
            <person name="Brooks K."/>
            <person name="Chillingworth T."/>
            <person name="Connerton P."/>
            <person name="Cronin A."/>
            <person name="Davis P."/>
            <person name="Davies R.M."/>
            <person name="Dowd L."/>
            <person name="White N."/>
            <person name="Farrar J."/>
            <person name="Feltwell T."/>
            <person name="Hamlin N."/>
            <person name="Haque A."/>
            <person name="Hien T.T."/>
            <person name="Holroyd S."/>
            <person name="Jagels K."/>
            <person name="Krogh A."/>
            <person name="Larsen T.S."/>
            <person name="Leather S."/>
            <person name="Moule S."/>
            <person name="O'Gaora P."/>
            <person name="Parry C."/>
            <person name="Quail M.A."/>
            <person name="Rutherford K.M."/>
            <person name="Simmonds M."/>
            <person name="Skelton J."/>
            <person name="Stevens K."/>
            <person name="Whitehead S."/>
            <person name="Barrell B.G."/>
        </authorList>
    </citation>
    <scope>NUCLEOTIDE SEQUENCE [LARGE SCALE GENOMIC DNA]</scope>
    <source>
        <strain>CT18</strain>
    </source>
</reference>
<protein>
    <recommendedName>
        <fullName>Uncharacterized protein YicS</fullName>
    </recommendedName>
</protein>
<proteinExistence type="predicted"/>
<dbReference type="EMBL" id="AE014613">
    <property type="protein sequence ID" value="AAO71235.1"/>
    <property type="molecule type" value="Genomic_DNA"/>
</dbReference>
<dbReference type="EMBL" id="AL513382">
    <property type="protein sequence ID" value="CAD03220.1"/>
    <property type="molecule type" value="Genomic_DNA"/>
</dbReference>
<dbReference type="RefSeq" id="NP_458161.1">
    <property type="nucleotide sequence ID" value="NC_003198.1"/>
</dbReference>
<dbReference type="RefSeq" id="WP_000824217.1">
    <property type="nucleotide sequence ID" value="NZ_WSUR01000001.1"/>
</dbReference>
<dbReference type="SMR" id="Q8XES2"/>
<dbReference type="STRING" id="220341.gene:17587863"/>
<dbReference type="KEGG" id="stt:t3744"/>
<dbReference type="KEGG" id="sty:STY4010"/>
<dbReference type="PATRIC" id="fig|220341.7.peg.4095"/>
<dbReference type="eggNOG" id="ENOG5032TQY">
    <property type="taxonomic scope" value="Bacteria"/>
</dbReference>
<dbReference type="HOGENOM" id="CLU_159877_2_0_6"/>
<dbReference type="OMA" id="QNNYWEA"/>
<dbReference type="OrthoDB" id="6571576at2"/>
<dbReference type="Proteomes" id="UP000000541">
    <property type="component" value="Chromosome"/>
</dbReference>
<dbReference type="Proteomes" id="UP000002670">
    <property type="component" value="Chromosome"/>
</dbReference>
<dbReference type="InterPro" id="IPR048144">
    <property type="entry name" value="YicS_fam"/>
</dbReference>
<dbReference type="NCBIfam" id="NF041639">
    <property type="entry name" value="YicS_fam"/>
    <property type="match status" value="1"/>
</dbReference>
<sequence>MKRKTLLLIATLVALPGVTYADSPFSSLQSAHEKNTILKDLRKMCTPKGALTDEAWEKKIMASEGNQQHIREAMIAIERNNQHNYWQALGKVECPEM</sequence>
<name>YICS_SALTI</name>
<organism>
    <name type="scientific">Salmonella typhi</name>
    <dbReference type="NCBI Taxonomy" id="90370"/>
    <lineage>
        <taxon>Bacteria</taxon>
        <taxon>Pseudomonadati</taxon>
        <taxon>Pseudomonadota</taxon>
        <taxon>Gammaproteobacteria</taxon>
        <taxon>Enterobacterales</taxon>
        <taxon>Enterobacteriaceae</taxon>
        <taxon>Salmonella</taxon>
    </lineage>
</organism>
<accession>Q8XES2</accession>
<accession>Q7ALZ3</accession>
<gene>
    <name type="primary">yicS</name>
    <name type="ordered locus">STY4010</name>
    <name type="ordered locus">t3744</name>
</gene>
<feature type="chain" id="PRO_0000262300" description="Uncharacterized protein YicS">
    <location>
        <begin position="1"/>
        <end position="97"/>
    </location>
</feature>